<keyword id="KW-0067">ATP-binding</keyword>
<keyword id="KW-0963">Cytoplasm</keyword>
<keyword id="KW-0418">Kinase</keyword>
<keyword id="KW-0547">Nucleotide-binding</keyword>
<keyword id="KW-1185">Reference proteome</keyword>
<keyword id="KW-0808">Transferase</keyword>
<protein>
    <recommendedName>
        <fullName evidence="1">Guanylate kinase</fullName>
        <ecNumber evidence="1">2.7.4.8</ecNumber>
    </recommendedName>
    <alternativeName>
        <fullName evidence="1">GMP kinase</fullName>
    </alternativeName>
</protein>
<name>KGUA_SALRD</name>
<evidence type="ECO:0000255" key="1">
    <source>
        <dbReference type="HAMAP-Rule" id="MF_00328"/>
    </source>
</evidence>
<organism>
    <name type="scientific">Salinibacter ruber (strain DSM 13855 / M31)</name>
    <dbReference type="NCBI Taxonomy" id="309807"/>
    <lineage>
        <taxon>Bacteria</taxon>
        <taxon>Pseudomonadati</taxon>
        <taxon>Rhodothermota</taxon>
        <taxon>Rhodothermia</taxon>
        <taxon>Rhodothermales</taxon>
        <taxon>Salinibacteraceae</taxon>
        <taxon>Salinibacter</taxon>
    </lineage>
</organism>
<comment type="function">
    <text evidence="1">Essential for recycling GMP and indirectly, cGMP.</text>
</comment>
<comment type="catalytic activity">
    <reaction evidence="1">
        <text>GMP + ATP = GDP + ADP</text>
        <dbReference type="Rhea" id="RHEA:20780"/>
        <dbReference type="ChEBI" id="CHEBI:30616"/>
        <dbReference type="ChEBI" id="CHEBI:58115"/>
        <dbReference type="ChEBI" id="CHEBI:58189"/>
        <dbReference type="ChEBI" id="CHEBI:456216"/>
        <dbReference type="EC" id="2.7.4.8"/>
    </reaction>
</comment>
<comment type="subcellular location">
    <subcellularLocation>
        <location evidence="1">Cytoplasm</location>
    </subcellularLocation>
</comment>
<comment type="similarity">
    <text evidence="1">Belongs to the guanylate kinase family.</text>
</comment>
<accession>Q2S6J5</accession>
<reference key="1">
    <citation type="journal article" date="2005" name="Proc. Natl. Acad. Sci. U.S.A.">
        <title>The genome of Salinibacter ruber: convergence and gene exchange among hyperhalophilic bacteria and archaea.</title>
        <authorList>
            <person name="Mongodin E.F."/>
            <person name="Nelson K.E."/>
            <person name="Daugherty S."/>
            <person name="DeBoy R.T."/>
            <person name="Wister J."/>
            <person name="Khouri H."/>
            <person name="Weidman J."/>
            <person name="Walsh D.A."/>
            <person name="Papke R.T."/>
            <person name="Sanchez Perez G."/>
            <person name="Sharma A.K."/>
            <person name="Nesbo C.L."/>
            <person name="MacLeod D."/>
            <person name="Bapteste E."/>
            <person name="Doolittle W.F."/>
            <person name="Charlebois R.L."/>
            <person name="Legault B."/>
            <person name="Rodriguez-Valera F."/>
        </authorList>
    </citation>
    <scope>NUCLEOTIDE SEQUENCE [LARGE SCALE GENOMIC DNA]</scope>
    <source>
        <strain>DSM 13855 / CECT 5946 / M31</strain>
    </source>
</reference>
<dbReference type="EC" id="2.7.4.8" evidence="1"/>
<dbReference type="EMBL" id="CP000159">
    <property type="protein sequence ID" value="ABC45468.1"/>
    <property type="molecule type" value="Genomic_DNA"/>
</dbReference>
<dbReference type="RefSeq" id="WP_011402819.1">
    <property type="nucleotide sequence ID" value="NC_007677.1"/>
</dbReference>
<dbReference type="RefSeq" id="YP_444186.1">
    <property type="nucleotide sequence ID" value="NC_007677.1"/>
</dbReference>
<dbReference type="SMR" id="Q2S6J5"/>
<dbReference type="STRING" id="309807.SRU_0030"/>
<dbReference type="EnsemblBacteria" id="ABC45468">
    <property type="protein sequence ID" value="ABC45468"/>
    <property type="gene ID" value="SRU_0030"/>
</dbReference>
<dbReference type="GeneID" id="83726860"/>
<dbReference type="KEGG" id="sru:SRU_0030"/>
<dbReference type="PATRIC" id="fig|309807.25.peg.28"/>
<dbReference type="eggNOG" id="COG0194">
    <property type="taxonomic scope" value="Bacteria"/>
</dbReference>
<dbReference type="HOGENOM" id="CLU_001715_1_2_10"/>
<dbReference type="OrthoDB" id="9808150at2"/>
<dbReference type="Proteomes" id="UP000008674">
    <property type="component" value="Chromosome"/>
</dbReference>
<dbReference type="GO" id="GO:0005829">
    <property type="term" value="C:cytosol"/>
    <property type="evidence" value="ECO:0007669"/>
    <property type="project" value="TreeGrafter"/>
</dbReference>
<dbReference type="GO" id="GO:0005524">
    <property type="term" value="F:ATP binding"/>
    <property type="evidence" value="ECO:0007669"/>
    <property type="project" value="UniProtKB-UniRule"/>
</dbReference>
<dbReference type="GO" id="GO:0004385">
    <property type="term" value="F:guanylate kinase activity"/>
    <property type="evidence" value="ECO:0007669"/>
    <property type="project" value="UniProtKB-UniRule"/>
</dbReference>
<dbReference type="CDD" id="cd00071">
    <property type="entry name" value="GMPK"/>
    <property type="match status" value="1"/>
</dbReference>
<dbReference type="FunFam" id="3.30.63.10:FF:000005">
    <property type="entry name" value="Guanylate kinase"/>
    <property type="match status" value="1"/>
</dbReference>
<dbReference type="Gene3D" id="3.30.63.10">
    <property type="entry name" value="Guanylate Kinase phosphate binding domain"/>
    <property type="match status" value="1"/>
</dbReference>
<dbReference type="Gene3D" id="3.40.50.300">
    <property type="entry name" value="P-loop containing nucleotide triphosphate hydrolases"/>
    <property type="match status" value="1"/>
</dbReference>
<dbReference type="HAMAP" id="MF_00328">
    <property type="entry name" value="Guanylate_kinase"/>
    <property type="match status" value="1"/>
</dbReference>
<dbReference type="InterPro" id="IPR008145">
    <property type="entry name" value="GK/Ca_channel_bsu"/>
</dbReference>
<dbReference type="InterPro" id="IPR008144">
    <property type="entry name" value="Guanylate_kin-like_dom"/>
</dbReference>
<dbReference type="InterPro" id="IPR017665">
    <property type="entry name" value="Guanylate_kinase"/>
</dbReference>
<dbReference type="InterPro" id="IPR020590">
    <property type="entry name" value="Guanylate_kinase_CS"/>
</dbReference>
<dbReference type="InterPro" id="IPR027417">
    <property type="entry name" value="P-loop_NTPase"/>
</dbReference>
<dbReference type="NCBIfam" id="TIGR03263">
    <property type="entry name" value="guanyl_kin"/>
    <property type="match status" value="1"/>
</dbReference>
<dbReference type="PANTHER" id="PTHR23117:SF13">
    <property type="entry name" value="GUANYLATE KINASE"/>
    <property type="match status" value="1"/>
</dbReference>
<dbReference type="PANTHER" id="PTHR23117">
    <property type="entry name" value="GUANYLATE KINASE-RELATED"/>
    <property type="match status" value="1"/>
</dbReference>
<dbReference type="Pfam" id="PF00625">
    <property type="entry name" value="Guanylate_kin"/>
    <property type="match status" value="1"/>
</dbReference>
<dbReference type="SMART" id="SM00072">
    <property type="entry name" value="GuKc"/>
    <property type="match status" value="1"/>
</dbReference>
<dbReference type="SUPFAM" id="SSF52540">
    <property type="entry name" value="P-loop containing nucleoside triphosphate hydrolases"/>
    <property type="match status" value="1"/>
</dbReference>
<dbReference type="PROSITE" id="PS00856">
    <property type="entry name" value="GUANYLATE_KINASE_1"/>
    <property type="match status" value="1"/>
</dbReference>
<dbReference type="PROSITE" id="PS50052">
    <property type="entry name" value="GUANYLATE_KINASE_2"/>
    <property type="match status" value="1"/>
</dbReference>
<sequence length="188" mass="21113">MPDRNIVVLTAPSGAGKTTIAHRVLEAMPDMQFSVSATTRAARPDETDGVDYHFLSPEEFRARIDAGDLLEYEEVYPDQFYGTLRSEVEDRAEDGPVLLDIDVKGALNVKRIFGDDALILFVAPPSLDELQRRLEGRGTEDRESLQDRLDRVEQEMDRADDCDAVVVNDDLDPAVEETLTRIRQFLSS</sequence>
<gene>
    <name evidence="1" type="primary">gmk</name>
    <name type="ordered locus">SRU_0030</name>
</gene>
<feature type="chain" id="PRO_0000266393" description="Guanylate kinase">
    <location>
        <begin position="1"/>
        <end position="188"/>
    </location>
</feature>
<feature type="domain" description="Guanylate kinase-like" evidence="1">
    <location>
        <begin position="4"/>
        <end position="183"/>
    </location>
</feature>
<feature type="binding site" evidence="1">
    <location>
        <begin position="11"/>
        <end position="18"/>
    </location>
    <ligand>
        <name>ATP</name>
        <dbReference type="ChEBI" id="CHEBI:30616"/>
    </ligand>
</feature>
<proteinExistence type="inferred from homology"/>